<dbReference type="EMBL" id="AJ719996">
    <property type="protein sequence ID" value="CAG31655.1"/>
    <property type="molecule type" value="mRNA"/>
</dbReference>
<dbReference type="RefSeq" id="NP_001006388.1">
    <property type="nucleotide sequence ID" value="NM_001006388.1"/>
</dbReference>
<dbReference type="SMR" id="Q5ZKT8"/>
<dbReference type="FunCoup" id="Q5ZKT8">
    <property type="interactions" value="1647"/>
</dbReference>
<dbReference type="STRING" id="9031.ENSGALP00000050167"/>
<dbReference type="PaxDb" id="9031-ENSGALP00000024617"/>
<dbReference type="GeneID" id="421121"/>
<dbReference type="KEGG" id="gga:421121"/>
<dbReference type="CTD" id="29088"/>
<dbReference type="VEuPathDB" id="HostDB:geneid_421121"/>
<dbReference type="eggNOG" id="KOG0846">
    <property type="taxonomic scope" value="Eukaryota"/>
</dbReference>
<dbReference type="InParanoid" id="Q5ZKT8"/>
<dbReference type="OrthoDB" id="361383at2759"/>
<dbReference type="PhylomeDB" id="Q5ZKT8"/>
<dbReference type="PRO" id="PR:Q5ZKT8"/>
<dbReference type="Proteomes" id="UP000000539">
    <property type="component" value="Unassembled WGS sequence"/>
</dbReference>
<dbReference type="GO" id="GO:0005762">
    <property type="term" value="C:mitochondrial large ribosomal subunit"/>
    <property type="evidence" value="ECO:0000250"/>
    <property type="project" value="UniProtKB"/>
</dbReference>
<dbReference type="GO" id="GO:0003735">
    <property type="term" value="F:structural constituent of ribosome"/>
    <property type="evidence" value="ECO:0000318"/>
    <property type="project" value="GO_Central"/>
</dbReference>
<dbReference type="GO" id="GO:0006412">
    <property type="term" value="P:translation"/>
    <property type="evidence" value="ECO:0007669"/>
    <property type="project" value="InterPro"/>
</dbReference>
<dbReference type="FunFam" id="3.100.10.10:FF:000006">
    <property type="entry name" value="39S ribosomal protein L15, mitochondrial"/>
    <property type="match status" value="1"/>
</dbReference>
<dbReference type="Gene3D" id="3.100.10.10">
    <property type="match status" value="1"/>
</dbReference>
<dbReference type="HAMAP" id="MF_01341">
    <property type="entry name" value="Ribosomal_uL15"/>
    <property type="match status" value="1"/>
</dbReference>
<dbReference type="InterPro" id="IPR030878">
    <property type="entry name" value="Ribosomal_uL15"/>
</dbReference>
<dbReference type="InterPro" id="IPR021131">
    <property type="entry name" value="Ribosomal_uL15/eL18"/>
</dbReference>
<dbReference type="InterPro" id="IPR036227">
    <property type="entry name" value="Ribosomal_uL15/eL18_sf"/>
</dbReference>
<dbReference type="InterPro" id="IPR005749">
    <property type="entry name" value="Ribosomal_uL15_bac-type"/>
</dbReference>
<dbReference type="NCBIfam" id="TIGR01071">
    <property type="entry name" value="rplO_bact"/>
    <property type="match status" value="1"/>
</dbReference>
<dbReference type="PANTHER" id="PTHR12934">
    <property type="entry name" value="50S RIBOSOMAL PROTEIN L15"/>
    <property type="match status" value="1"/>
</dbReference>
<dbReference type="PANTHER" id="PTHR12934:SF11">
    <property type="entry name" value="LARGE RIBOSOMAL SUBUNIT PROTEIN UL15M"/>
    <property type="match status" value="1"/>
</dbReference>
<dbReference type="Pfam" id="PF00828">
    <property type="entry name" value="Ribosomal_L27A"/>
    <property type="match status" value="1"/>
</dbReference>
<dbReference type="SUPFAM" id="SSF52080">
    <property type="entry name" value="Ribosomal proteins L15p and L18e"/>
    <property type="match status" value="1"/>
</dbReference>
<evidence type="ECO:0000250" key="1">
    <source>
        <dbReference type="UniProtKB" id="Q0VC21"/>
    </source>
</evidence>
<evidence type="ECO:0000250" key="2">
    <source>
        <dbReference type="UniProtKB" id="Q9P015"/>
    </source>
</evidence>
<evidence type="ECO:0000256" key="3">
    <source>
        <dbReference type="SAM" id="MobiDB-lite"/>
    </source>
</evidence>
<evidence type="ECO:0000305" key="4"/>
<name>RM15_CHICK</name>
<protein>
    <recommendedName>
        <fullName evidence="4">Large ribosomal subunit protein uL15m</fullName>
    </recommendedName>
    <alternativeName>
        <fullName>39S ribosomal protein L15, mitochondrial</fullName>
        <shortName>L15mt</shortName>
        <shortName>MRP-L15</shortName>
    </alternativeName>
</protein>
<proteinExistence type="evidence at transcript level"/>
<gene>
    <name type="primary">MRPL15</name>
    <name type="ORF">RCJMB04_9c23</name>
</gene>
<feature type="transit peptide" description="Mitochondrion" evidence="1">
    <location>
        <begin position="1"/>
        <end position="21"/>
    </location>
</feature>
<feature type="chain" id="PRO_0000257841" description="Large ribosomal subunit protein uL15m">
    <location>
        <begin position="22"/>
        <end position="297"/>
    </location>
</feature>
<feature type="region of interest" description="Disordered" evidence="3">
    <location>
        <begin position="23"/>
        <end position="69"/>
    </location>
</feature>
<feature type="compositionally biased region" description="Basic residues" evidence="3">
    <location>
        <begin position="36"/>
        <end position="53"/>
    </location>
</feature>
<comment type="subunit">
    <text evidence="2">Component of the mitochondrial ribosome large subunit (39S) which comprises a 16S rRNA and about 50 distinct proteins.</text>
</comment>
<comment type="subcellular location">
    <subcellularLocation>
        <location evidence="2">Mitochondrion</location>
    </subcellularLocation>
</comment>
<comment type="similarity">
    <text evidence="4">Belongs to the universal ribosomal protein uL15 family.</text>
</comment>
<organism>
    <name type="scientific">Gallus gallus</name>
    <name type="common">Chicken</name>
    <dbReference type="NCBI Taxonomy" id="9031"/>
    <lineage>
        <taxon>Eukaryota</taxon>
        <taxon>Metazoa</taxon>
        <taxon>Chordata</taxon>
        <taxon>Craniata</taxon>
        <taxon>Vertebrata</taxon>
        <taxon>Euteleostomi</taxon>
        <taxon>Archelosauria</taxon>
        <taxon>Archosauria</taxon>
        <taxon>Dinosauria</taxon>
        <taxon>Saurischia</taxon>
        <taxon>Theropoda</taxon>
        <taxon>Coelurosauria</taxon>
        <taxon>Aves</taxon>
        <taxon>Neognathae</taxon>
        <taxon>Galloanserae</taxon>
        <taxon>Galliformes</taxon>
        <taxon>Phasianidae</taxon>
        <taxon>Phasianinae</taxon>
        <taxon>Gallus</taxon>
    </lineage>
</organism>
<keyword id="KW-0496">Mitochondrion</keyword>
<keyword id="KW-1185">Reference proteome</keyword>
<keyword id="KW-0687">Ribonucleoprotein</keyword>
<keyword id="KW-0689">Ribosomal protein</keyword>
<keyword id="KW-0809">Transit peptide</keyword>
<accession>Q5ZKT8</accession>
<reference key="1">
    <citation type="journal article" date="2005" name="Genome Biol.">
        <title>Full-length cDNAs from chicken bursal lymphocytes to facilitate gene function analysis.</title>
        <authorList>
            <person name="Caldwell R.B."/>
            <person name="Kierzek A.M."/>
            <person name="Arakawa H."/>
            <person name="Bezzubov Y."/>
            <person name="Zaim J."/>
            <person name="Fiedler P."/>
            <person name="Kutter S."/>
            <person name="Blagodatski A."/>
            <person name="Kostovska D."/>
            <person name="Koter M."/>
            <person name="Plachy J."/>
            <person name="Carninci P."/>
            <person name="Hayashizaki Y."/>
            <person name="Buerstedde J.-M."/>
        </authorList>
    </citation>
    <scope>NUCLEOTIDE SEQUENCE [LARGE SCALE MRNA]</scope>
    <source>
        <strain>CB</strain>
        <tissue>Bursa of Fabricius</tissue>
    </source>
</reference>
<sequence>MSGNGVHGVHGALQLLRSLPKVSLANLRPNPGSKKPERRRGRGRYRGRKCGRGHKGERQRGNRPRLGFEGGQTPFYLSIPKYGFNEGHSCRRKYHPLSLQKLQYLIDLGRVDPTQPIDLTQLTNARGVTVQPLKRDYGVQLVEEGADIFAAKINIEVQRASELAIAAIEKNGGVVTASFYDPRSLEILIRPVPFFLRGQPIPKRMLPPEDLVRYYTDASNRGYLADPSKVAEARLELAKKYGYTLPDITKDELFKMLSTRKDPRQIFFGLAPGWIVNMADKKILKPTDERLLKYYSS</sequence>